<protein>
    <recommendedName>
        <fullName>1-Cys peroxiredoxin</fullName>
        <ecNumber evidence="5">1.11.1.-</ecNumber>
    </recommendedName>
    <alternativeName>
        <fullName>1-CysPxn</fullName>
    </alternativeName>
    <alternativeName>
        <fullName>Thioredoxin peroxidase</fullName>
    </alternativeName>
</protein>
<feature type="chain" id="PRO_0000135106" description="1-Cys peroxiredoxin">
    <location>
        <begin position="1"/>
        <end position="235"/>
    </location>
</feature>
<feature type="domain" description="Thioredoxin" evidence="4">
    <location>
        <begin position="5"/>
        <end position="179"/>
    </location>
</feature>
<feature type="active site" evidence="1">
    <location>
        <position position="49"/>
    </location>
</feature>
<feature type="active site" description="Cysteine sulfenic acid (-SOH) intermediate" evidence="2">
    <location>
        <position position="49"/>
    </location>
</feature>
<feature type="sequence conflict" description="In Ref. 2; AAB83998." ref="2">
    <original>K</original>
    <variation>N</variation>
    <location>
        <position position="64"/>
    </location>
</feature>
<feature type="sequence conflict" description="In Ref. 2; AAB83998." ref="2">
    <original>G</original>
    <variation>D</variation>
    <location>
        <position position="193"/>
    </location>
</feature>
<sequence length="235" mass="26298">MTKGILLGDKFPDFRAETNEGFIPSFYDWIGKDSWAILFSHPRDFTPVCTTELARLVQLAPEFKKRNVKLIGLSCDSAESHRKWVDDIMAVCKMKCNDGDTCCSGNKLPFPIIADENRFLATELGMMDPDERDENGNALTARCVFIIGPEKTLKLSILYPATTGRNFDEILRVVDSLQLTAVKLVATPVDWKGGDDCVVLPTIDDTEAKKLFGEKINTIELPSGKHYLRMVAHPK</sequence>
<evidence type="ECO:0000250" key="1"/>
<evidence type="ECO:0000250" key="2">
    <source>
        <dbReference type="UniProtKB" id="P30041"/>
    </source>
</evidence>
<evidence type="ECO:0000250" key="3">
    <source>
        <dbReference type="UniProtKB" id="P34227"/>
    </source>
</evidence>
<evidence type="ECO:0000255" key="4">
    <source>
        <dbReference type="PROSITE-ProRule" id="PRU00691"/>
    </source>
</evidence>
<evidence type="ECO:0000269" key="5">
    <source>
    </source>
</evidence>
<evidence type="ECO:0000305" key="6"/>
<comment type="function">
    <text evidence="5">Thiol-specific peroxidase that catalyzes the reduction of hydrogen peroxide and organic hydroperoxides to water and alcohols, respectively. Plays a role in cell protection against oxidative stress by detoxifying peroxides.</text>
</comment>
<comment type="catalytic activity">
    <reaction evidence="5">
        <text>a hydroperoxide + [protein]-dithiol = [protein]-disulfide + an alcohol + H2O</text>
        <dbReference type="Rhea" id="RHEA:10008"/>
        <dbReference type="Rhea" id="RHEA-COMP:10593"/>
        <dbReference type="Rhea" id="RHEA-COMP:10594"/>
        <dbReference type="ChEBI" id="CHEBI:15377"/>
        <dbReference type="ChEBI" id="CHEBI:29950"/>
        <dbReference type="ChEBI" id="CHEBI:30879"/>
        <dbReference type="ChEBI" id="CHEBI:35924"/>
        <dbReference type="ChEBI" id="CHEBI:50058"/>
    </reaction>
</comment>
<comment type="biophysicochemical properties">
    <kinetics>
        <KM evidence="5">16.28 mM for H(2)O(2)</KM>
        <Vmax evidence="5">16.0 umol/min/mg enzyme</Vmax>
    </kinetics>
</comment>
<comment type="subcellular location">
    <subcellularLocation>
        <location evidence="1">Cytoplasm</location>
    </subcellularLocation>
</comment>
<comment type="miscellaneous">
    <text evidence="3">The active site is a conserved redox-active cysteine residue, the peroxidatic cysteine (C(P)), which makes the nucleophilic attack on the peroxide substrate. The peroxide oxidizes the C(P)-SH to cysteine sulfenic acid (C(P)-SOH), which then reacts with another cysteine residue, the resolving cysteine (C(R)), to form a disulfide bridge. The disulfide is subsequently reduced by an appropriate electron donor to complete the catalytic cycle. In this 1-Cys peroxiredoxin, no C(R) is present and C(P) instead forms a disulfide with a cysteine from another protein or with a small thiol molecule.</text>
</comment>
<comment type="similarity">
    <text evidence="6">Belongs to the peroxiredoxin family. Prx6 subfamily.</text>
</comment>
<proteinExistence type="evidence at protein level"/>
<name>1CPX_DIRIM</name>
<accession>O17433</accession>
<accession>Q9U5A1</accession>
<organism>
    <name type="scientific">Dirofilaria immitis</name>
    <name type="common">Canine heartworm</name>
    <dbReference type="NCBI Taxonomy" id="6287"/>
    <lineage>
        <taxon>Eukaryota</taxon>
        <taxon>Metazoa</taxon>
        <taxon>Ecdysozoa</taxon>
        <taxon>Nematoda</taxon>
        <taxon>Chromadorea</taxon>
        <taxon>Rhabditida</taxon>
        <taxon>Spirurina</taxon>
        <taxon>Spiruromorpha</taxon>
        <taxon>Filarioidea</taxon>
        <taxon>Onchocercidae</taxon>
        <taxon>Dirofilaria</taxon>
    </lineage>
</organism>
<keyword id="KW-0049">Antioxidant</keyword>
<keyword id="KW-0963">Cytoplasm</keyword>
<keyword id="KW-0560">Oxidoreductase</keyword>
<keyword id="KW-0575">Peroxidase</keyword>
<keyword id="KW-0676">Redox-active center</keyword>
<dbReference type="EC" id="1.11.1.-" evidence="5"/>
<dbReference type="EMBL" id="AF045164">
    <property type="protein sequence ID" value="AAF21097.1"/>
    <property type="molecule type" value="mRNA"/>
</dbReference>
<dbReference type="EMBL" id="AF027387">
    <property type="protein sequence ID" value="AAB83998.1"/>
    <property type="molecule type" value="mRNA"/>
</dbReference>
<dbReference type="SMR" id="O17433"/>
<dbReference type="PeroxiBase" id="4935">
    <property type="entry name" value="Di1CysPrx"/>
</dbReference>
<dbReference type="GO" id="GO:0005829">
    <property type="term" value="C:cytosol"/>
    <property type="evidence" value="ECO:0007669"/>
    <property type="project" value="TreeGrafter"/>
</dbReference>
<dbReference type="GO" id="GO:0005739">
    <property type="term" value="C:mitochondrion"/>
    <property type="evidence" value="ECO:0007669"/>
    <property type="project" value="TreeGrafter"/>
</dbReference>
<dbReference type="GO" id="GO:0051920">
    <property type="term" value="F:peroxiredoxin activity"/>
    <property type="evidence" value="ECO:0007669"/>
    <property type="project" value="InterPro"/>
</dbReference>
<dbReference type="GO" id="GO:0045454">
    <property type="term" value="P:cell redox homeostasis"/>
    <property type="evidence" value="ECO:0007669"/>
    <property type="project" value="TreeGrafter"/>
</dbReference>
<dbReference type="CDD" id="cd03016">
    <property type="entry name" value="PRX_1cys"/>
    <property type="match status" value="1"/>
</dbReference>
<dbReference type="FunFam" id="3.30.1020.10:FF:000001">
    <property type="entry name" value="1-Cys peroxiredoxin"/>
    <property type="match status" value="1"/>
</dbReference>
<dbReference type="FunFam" id="3.40.30.10:FF:000011">
    <property type="entry name" value="Peroxiredoxin PRX1"/>
    <property type="match status" value="1"/>
</dbReference>
<dbReference type="Gene3D" id="3.30.1020.10">
    <property type="entry name" value="Antioxidant, Horf6, Chain A, domain2"/>
    <property type="match status" value="1"/>
</dbReference>
<dbReference type="Gene3D" id="3.40.30.10">
    <property type="entry name" value="Glutaredoxin"/>
    <property type="match status" value="1"/>
</dbReference>
<dbReference type="InterPro" id="IPR000866">
    <property type="entry name" value="AhpC/TSA"/>
</dbReference>
<dbReference type="InterPro" id="IPR024706">
    <property type="entry name" value="Peroxiredoxin_AhpC-typ"/>
</dbReference>
<dbReference type="InterPro" id="IPR019479">
    <property type="entry name" value="Peroxiredoxin_C"/>
</dbReference>
<dbReference type="InterPro" id="IPR045020">
    <property type="entry name" value="PRX_1cys"/>
</dbReference>
<dbReference type="InterPro" id="IPR036249">
    <property type="entry name" value="Thioredoxin-like_sf"/>
</dbReference>
<dbReference type="InterPro" id="IPR013766">
    <property type="entry name" value="Thioredoxin_domain"/>
</dbReference>
<dbReference type="PANTHER" id="PTHR43503">
    <property type="entry name" value="MCG48959-RELATED"/>
    <property type="match status" value="1"/>
</dbReference>
<dbReference type="PANTHER" id="PTHR43503:SF4">
    <property type="entry name" value="PEROXIREDOXIN-6"/>
    <property type="match status" value="1"/>
</dbReference>
<dbReference type="Pfam" id="PF10417">
    <property type="entry name" value="1-cysPrx_C"/>
    <property type="match status" value="1"/>
</dbReference>
<dbReference type="Pfam" id="PF00578">
    <property type="entry name" value="AhpC-TSA"/>
    <property type="match status" value="1"/>
</dbReference>
<dbReference type="PIRSF" id="PIRSF000239">
    <property type="entry name" value="AHPC"/>
    <property type="match status" value="1"/>
</dbReference>
<dbReference type="SUPFAM" id="SSF52833">
    <property type="entry name" value="Thioredoxin-like"/>
    <property type="match status" value="1"/>
</dbReference>
<dbReference type="PROSITE" id="PS51352">
    <property type="entry name" value="THIOREDOXIN_2"/>
    <property type="match status" value="1"/>
</dbReference>
<reference key="1">
    <citation type="journal article" date="2000" name="Parasitol. Res.">
        <title>Removal of hydrogen peroxide by a 1-cysteine peroxiredoxin enzyme of the filarial parasite Dirofilaria immitis.</title>
        <authorList>
            <person name="Chandrashekar R."/>
            <person name="Tsuji N."/>
            <person name="Morales T.H."/>
            <person name="Carmody A.B."/>
            <person name="Ozols V.O."/>
            <person name="Welton J."/>
            <person name="Tang L."/>
        </authorList>
    </citation>
    <scope>NUCLEOTIDE SEQUENCE [MRNA]</scope>
    <scope>FUNCTION</scope>
    <scope>CATALYTIC ACTIVITY</scope>
    <scope>BIOPHYSICOCHEMICAL PROPERTIES</scope>
</reference>
<reference key="2">
    <citation type="submission" date="1997-09" db="EMBL/GenBank/DDBJ databases">
        <title>1-Cys peroxidoxin from Dirofilaria immitis.</title>
        <authorList>
            <person name="McGonigle S."/>
            <person name="James E.R."/>
        </authorList>
    </citation>
    <scope>NUCLEOTIDE SEQUENCE [MRNA]</scope>
</reference>